<keyword id="KW-1185">Reference proteome</keyword>
<keyword id="KW-0687">Ribonucleoprotein</keyword>
<keyword id="KW-0689">Ribosomal protein</keyword>
<keyword id="KW-0694">RNA-binding</keyword>
<keyword id="KW-0699">rRNA-binding</keyword>
<organism>
    <name type="scientific">Zymomonas mobilis subsp. mobilis (strain ATCC 31821 / ZM4 / CP4)</name>
    <dbReference type="NCBI Taxonomy" id="264203"/>
    <lineage>
        <taxon>Bacteria</taxon>
        <taxon>Pseudomonadati</taxon>
        <taxon>Pseudomonadota</taxon>
        <taxon>Alphaproteobacteria</taxon>
        <taxon>Sphingomonadales</taxon>
        <taxon>Zymomonadaceae</taxon>
        <taxon>Zymomonas</taxon>
    </lineage>
</organism>
<dbReference type="EMBL" id="AE008692">
    <property type="protein sequence ID" value="AAV89149.1"/>
    <property type="molecule type" value="Genomic_DNA"/>
</dbReference>
<dbReference type="RefSeq" id="WP_011240432.1">
    <property type="nucleotide sequence ID" value="NZ_CP035711.1"/>
</dbReference>
<dbReference type="SMR" id="Q5NQ56"/>
<dbReference type="STRING" id="264203.ZMO0525"/>
<dbReference type="GeneID" id="79904283"/>
<dbReference type="KEGG" id="zmo:ZMO0525"/>
<dbReference type="eggNOG" id="COG0186">
    <property type="taxonomic scope" value="Bacteria"/>
</dbReference>
<dbReference type="HOGENOM" id="CLU_073626_1_1_5"/>
<dbReference type="Proteomes" id="UP000001173">
    <property type="component" value="Chromosome"/>
</dbReference>
<dbReference type="GO" id="GO:0022627">
    <property type="term" value="C:cytosolic small ribosomal subunit"/>
    <property type="evidence" value="ECO:0007669"/>
    <property type="project" value="TreeGrafter"/>
</dbReference>
<dbReference type="GO" id="GO:0019843">
    <property type="term" value="F:rRNA binding"/>
    <property type="evidence" value="ECO:0007669"/>
    <property type="project" value="UniProtKB-UniRule"/>
</dbReference>
<dbReference type="GO" id="GO:0003735">
    <property type="term" value="F:structural constituent of ribosome"/>
    <property type="evidence" value="ECO:0007669"/>
    <property type="project" value="InterPro"/>
</dbReference>
<dbReference type="GO" id="GO:0006412">
    <property type="term" value="P:translation"/>
    <property type="evidence" value="ECO:0007669"/>
    <property type="project" value="UniProtKB-UniRule"/>
</dbReference>
<dbReference type="CDD" id="cd00364">
    <property type="entry name" value="Ribosomal_uS17"/>
    <property type="match status" value="1"/>
</dbReference>
<dbReference type="Gene3D" id="2.40.50.140">
    <property type="entry name" value="Nucleic acid-binding proteins"/>
    <property type="match status" value="1"/>
</dbReference>
<dbReference type="HAMAP" id="MF_01345_B">
    <property type="entry name" value="Ribosomal_uS17_B"/>
    <property type="match status" value="1"/>
</dbReference>
<dbReference type="InterPro" id="IPR012340">
    <property type="entry name" value="NA-bd_OB-fold"/>
</dbReference>
<dbReference type="InterPro" id="IPR000266">
    <property type="entry name" value="Ribosomal_uS17"/>
</dbReference>
<dbReference type="InterPro" id="IPR019984">
    <property type="entry name" value="Ribosomal_uS17_bact/chlr"/>
</dbReference>
<dbReference type="NCBIfam" id="NF004123">
    <property type="entry name" value="PRK05610.1"/>
    <property type="match status" value="1"/>
</dbReference>
<dbReference type="NCBIfam" id="TIGR03635">
    <property type="entry name" value="uS17_bact"/>
    <property type="match status" value="1"/>
</dbReference>
<dbReference type="PANTHER" id="PTHR10744">
    <property type="entry name" value="40S RIBOSOMAL PROTEIN S11 FAMILY MEMBER"/>
    <property type="match status" value="1"/>
</dbReference>
<dbReference type="PANTHER" id="PTHR10744:SF1">
    <property type="entry name" value="SMALL RIBOSOMAL SUBUNIT PROTEIN US17M"/>
    <property type="match status" value="1"/>
</dbReference>
<dbReference type="Pfam" id="PF00366">
    <property type="entry name" value="Ribosomal_S17"/>
    <property type="match status" value="1"/>
</dbReference>
<dbReference type="PRINTS" id="PR00973">
    <property type="entry name" value="RIBOSOMALS17"/>
</dbReference>
<dbReference type="SUPFAM" id="SSF50249">
    <property type="entry name" value="Nucleic acid-binding proteins"/>
    <property type="match status" value="1"/>
</dbReference>
<comment type="function">
    <text evidence="1">One of the primary rRNA binding proteins, it binds specifically to the 5'-end of 16S ribosomal RNA.</text>
</comment>
<comment type="subunit">
    <text evidence="1">Part of the 30S ribosomal subunit.</text>
</comment>
<comment type="similarity">
    <text evidence="1">Belongs to the universal ribosomal protein uS17 family.</text>
</comment>
<proteinExistence type="inferred from homology"/>
<accession>Q5NQ56</accession>
<protein>
    <recommendedName>
        <fullName evidence="1">Small ribosomal subunit protein uS17</fullName>
    </recommendedName>
    <alternativeName>
        <fullName evidence="2">30S ribosomal protein S17</fullName>
    </alternativeName>
</protein>
<evidence type="ECO:0000255" key="1">
    <source>
        <dbReference type="HAMAP-Rule" id="MF_01345"/>
    </source>
</evidence>
<evidence type="ECO:0000305" key="2"/>
<gene>
    <name evidence="1" type="primary">rpsQ</name>
    <name type="ordered locus">ZMO0525</name>
</gene>
<name>RS17_ZYMMO</name>
<sequence>MPKRVLTGTVVSDKTDKTVVVLVERKVKHPLYGKIIRLSKKYHAHDEQNAYHEGETVRIEECAPISKLKSWRVLEKADKASAA</sequence>
<feature type="chain" id="PRO_0000233622" description="Small ribosomal subunit protein uS17">
    <location>
        <begin position="1"/>
        <end position="83"/>
    </location>
</feature>
<reference key="1">
    <citation type="journal article" date="2005" name="Nat. Biotechnol.">
        <title>The genome sequence of the ethanologenic bacterium Zymomonas mobilis ZM4.</title>
        <authorList>
            <person name="Seo J.-S."/>
            <person name="Chong H."/>
            <person name="Park H.S."/>
            <person name="Yoon K.-O."/>
            <person name="Jung C."/>
            <person name="Kim J.J."/>
            <person name="Hong J.H."/>
            <person name="Kim H."/>
            <person name="Kim J.-H."/>
            <person name="Kil J.-I."/>
            <person name="Park C.J."/>
            <person name="Oh H.-M."/>
            <person name="Lee J.-S."/>
            <person name="Jin S.-J."/>
            <person name="Um H.-W."/>
            <person name="Lee H.-J."/>
            <person name="Oh S.-J."/>
            <person name="Kim J.Y."/>
            <person name="Kang H.L."/>
            <person name="Lee S.Y."/>
            <person name="Lee K.J."/>
            <person name="Kang H.S."/>
        </authorList>
    </citation>
    <scope>NUCLEOTIDE SEQUENCE [LARGE SCALE GENOMIC DNA]</scope>
    <source>
        <strain>ATCC 31821 / ZM4 / CP4</strain>
    </source>
</reference>